<organism>
    <name type="scientific">Homo sapiens</name>
    <name type="common">Human</name>
    <dbReference type="NCBI Taxonomy" id="9606"/>
    <lineage>
        <taxon>Eukaryota</taxon>
        <taxon>Metazoa</taxon>
        <taxon>Chordata</taxon>
        <taxon>Craniata</taxon>
        <taxon>Vertebrata</taxon>
        <taxon>Euteleostomi</taxon>
        <taxon>Mammalia</taxon>
        <taxon>Eutheria</taxon>
        <taxon>Euarchontoglires</taxon>
        <taxon>Primates</taxon>
        <taxon>Haplorrhini</taxon>
        <taxon>Catarrhini</taxon>
        <taxon>Hominidae</taxon>
        <taxon>Homo</taxon>
    </lineage>
</organism>
<reference key="1">
    <citation type="journal article" date="1998" name="EMBO J.">
        <title>PAK4, a novel effector for Cdc42Hs, is implicated in the reorganization of the actin cytoskeleton and in the formation of filopodia.</title>
        <authorList>
            <person name="Abo A."/>
            <person name="Qu J."/>
            <person name="Cammarano M.S."/>
            <person name="Dan C."/>
            <person name="Fritsch A."/>
            <person name="Baud V."/>
            <person name="Belisle B."/>
            <person name="Minden A."/>
        </authorList>
    </citation>
    <scope>NUCLEOTIDE SEQUENCE [MRNA] (ISOFORM 1)</scope>
    <source>
        <tissue>Lymphoma</tissue>
    </source>
</reference>
<reference key="2">
    <citation type="submission" date="1997-05" db="EMBL/GenBank/DDBJ databases">
        <authorList>
            <person name="Melnick M.B."/>
        </authorList>
    </citation>
    <scope>NUCLEOTIDE SEQUENCE [MRNA] (ISOFORM 1)</scope>
    <source>
        <tissue>Neuroblastoma</tissue>
    </source>
</reference>
<reference key="3">
    <citation type="journal article" date="1999" name="DNA Res.">
        <title>Characterization of cDNA clones selected by the GeneMark analysis from size-fractionated cDNA libraries from human brain.</title>
        <authorList>
            <person name="Hirosawa M."/>
            <person name="Nagase T."/>
            <person name="Ishikawa K."/>
            <person name="Kikuno R."/>
            <person name="Nomura N."/>
            <person name="Ohara O."/>
        </authorList>
    </citation>
    <scope>NUCLEOTIDE SEQUENCE [LARGE SCALE MRNA] (ISOFORM 3)</scope>
    <source>
        <tissue>Brain</tissue>
    </source>
</reference>
<reference key="4">
    <citation type="journal article" date="2004" name="Nat. Genet.">
        <title>Complete sequencing and characterization of 21,243 full-length human cDNAs.</title>
        <authorList>
            <person name="Ota T."/>
            <person name="Suzuki Y."/>
            <person name="Nishikawa T."/>
            <person name="Otsuki T."/>
            <person name="Sugiyama T."/>
            <person name="Irie R."/>
            <person name="Wakamatsu A."/>
            <person name="Hayashi K."/>
            <person name="Sato H."/>
            <person name="Nagai K."/>
            <person name="Kimura K."/>
            <person name="Makita H."/>
            <person name="Sekine M."/>
            <person name="Obayashi M."/>
            <person name="Nishi T."/>
            <person name="Shibahara T."/>
            <person name="Tanaka T."/>
            <person name="Ishii S."/>
            <person name="Yamamoto J."/>
            <person name="Saito K."/>
            <person name="Kawai Y."/>
            <person name="Isono Y."/>
            <person name="Nakamura Y."/>
            <person name="Nagahari K."/>
            <person name="Murakami K."/>
            <person name="Yasuda T."/>
            <person name="Iwayanagi T."/>
            <person name="Wagatsuma M."/>
            <person name="Shiratori A."/>
            <person name="Sudo H."/>
            <person name="Hosoiri T."/>
            <person name="Kaku Y."/>
            <person name="Kodaira H."/>
            <person name="Kondo H."/>
            <person name="Sugawara M."/>
            <person name="Takahashi M."/>
            <person name="Kanda K."/>
            <person name="Yokoi T."/>
            <person name="Furuya T."/>
            <person name="Kikkawa E."/>
            <person name="Omura Y."/>
            <person name="Abe K."/>
            <person name="Kamihara K."/>
            <person name="Katsuta N."/>
            <person name="Sato K."/>
            <person name="Tanikawa M."/>
            <person name="Yamazaki M."/>
            <person name="Ninomiya K."/>
            <person name="Ishibashi T."/>
            <person name="Yamashita H."/>
            <person name="Murakawa K."/>
            <person name="Fujimori K."/>
            <person name="Tanai H."/>
            <person name="Kimata M."/>
            <person name="Watanabe M."/>
            <person name="Hiraoka S."/>
            <person name="Chiba Y."/>
            <person name="Ishida S."/>
            <person name="Ono Y."/>
            <person name="Takiguchi S."/>
            <person name="Watanabe S."/>
            <person name="Yosida M."/>
            <person name="Hotuta T."/>
            <person name="Kusano J."/>
            <person name="Kanehori K."/>
            <person name="Takahashi-Fujii A."/>
            <person name="Hara H."/>
            <person name="Tanase T.-O."/>
            <person name="Nomura Y."/>
            <person name="Togiya S."/>
            <person name="Komai F."/>
            <person name="Hara R."/>
            <person name="Takeuchi K."/>
            <person name="Arita M."/>
            <person name="Imose N."/>
            <person name="Musashino K."/>
            <person name="Yuuki H."/>
            <person name="Oshima A."/>
            <person name="Sasaki N."/>
            <person name="Aotsuka S."/>
            <person name="Yoshikawa Y."/>
            <person name="Matsunawa H."/>
            <person name="Ichihara T."/>
            <person name="Shiohata N."/>
            <person name="Sano S."/>
            <person name="Moriya S."/>
            <person name="Momiyama H."/>
            <person name="Satoh N."/>
            <person name="Takami S."/>
            <person name="Terashima Y."/>
            <person name="Suzuki O."/>
            <person name="Nakagawa S."/>
            <person name="Senoh A."/>
            <person name="Mizoguchi H."/>
            <person name="Goto Y."/>
            <person name="Shimizu F."/>
            <person name="Wakebe H."/>
            <person name="Hishigaki H."/>
            <person name="Watanabe T."/>
            <person name="Sugiyama A."/>
            <person name="Takemoto M."/>
            <person name="Kawakami B."/>
            <person name="Yamazaki M."/>
            <person name="Watanabe K."/>
            <person name="Kumagai A."/>
            <person name="Itakura S."/>
            <person name="Fukuzumi Y."/>
            <person name="Fujimori Y."/>
            <person name="Komiyama M."/>
            <person name="Tashiro H."/>
            <person name="Tanigami A."/>
            <person name="Fujiwara T."/>
            <person name="Ono T."/>
            <person name="Yamada K."/>
            <person name="Fujii Y."/>
            <person name="Ozaki K."/>
            <person name="Hirao M."/>
            <person name="Ohmori Y."/>
            <person name="Kawabata A."/>
            <person name="Hikiji T."/>
            <person name="Kobatake N."/>
            <person name="Inagaki H."/>
            <person name="Ikema Y."/>
            <person name="Okamoto S."/>
            <person name="Okitani R."/>
            <person name="Kawakami T."/>
            <person name="Noguchi S."/>
            <person name="Itoh T."/>
            <person name="Shigeta K."/>
            <person name="Senba T."/>
            <person name="Matsumura K."/>
            <person name="Nakajima Y."/>
            <person name="Mizuno T."/>
            <person name="Morinaga M."/>
            <person name="Sasaki M."/>
            <person name="Togashi T."/>
            <person name="Oyama M."/>
            <person name="Hata H."/>
            <person name="Watanabe M."/>
            <person name="Komatsu T."/>
            <person name="Mizushima-Sugano J."/>
            <person name="Satoh T."/>
            <person name="Shirai Y."/>
            <person name="Takahashi Y."/>
            <person name="Nakagawa K."/>
            <person name="Okumura K."/>
            <person name="Nagase T."/>
            <person name="Nomura N."/>
            <person name="Kikuchi H."/>
            <person name="Masuho Y."/>
            <person name="Yamashita R."/>
            <person name="Nakai K."/>
            <person name="Yada T."/>
            <person name="Nakamura Y."/>
            <person name="Ohara O."/>
            <person name="Isogai T."/>
            <person name="Sugano S."/>
        </authorList>
    </citation>
    <scope>NUCLEOTIDE SEQUENCE [LARGE SCALE MRNA] (ISOFORM 3)</scope>
    <scope>NUCLEOTIDE SEQUENCE [LARGE SCALE MRNA] OF 264-591 (ISOFORM 1)</scope>
    <source>
        <tissue>Brain</tissue>
        <tissue>Teratocarcinoma</tissue>
    </source>
</reference>
<reference key="5">
    <citation type="journal article" date="2007" name="BMC Genomics">
        <title>The full-ORF clone resource of the German cDNA consortium.</title>
        <authorList>
            <person name="Bechtel S."/>
            <person name="Rosenfelder H."/>
            <person name="Duda A."/>
            <person name="Schmidt C.P."/>
            <person name="Ernst U."/>
            <person name="Wellenreuther R."/>
            <person name="Mehrle A."/>
            <person name="Schuster C."/>
            <person name="Bahr A."/>
            <person name="Bloecker H."/>
            <person name="Heubner D."/>
            <person name="Hoerlein A."/>
            <person name="Michel G."/>
            <person name="Wedler H."/>
            <person name="Koehrer K."/>
            <person name="Ottenwaelder B."/>
            <person name="Poustka A."/>
            <person name="Wiemann S."/>
            <person name="Schupp I."/>
        </authorList>
    </citation>
    <scope>NUCLEOTIDE SEQUENCE [LARGE SCALE MRNA] (ISOFORM 3)</scope>
    <source>
        <tissue>Brain</tissue>
    </source>
</reference>
<reference key="6">
    <citation type="submission" date="2005-07" db="EMBL/GenBank/DDBJ databases">
        <authorList>
            <person name="Mural R.J."/>
            <person name="Istrail S."/>
            <person name="Sutton G.G."/>
            <person name="Florea L."/>
            <person name="Halpern A.L."/>
            <person name="Mobarry C.M."/>
            <person name="Lippert R."/>
            <person name="Walenz B."/>
            <person name="Shatkay H."/>
            <person name="Dew I."/>
            <person name="Miller J.R."/>
            <person name="Flanigan M.J."/>
            <person name="Edwards N.J."/>
            <person name="Bolanos R."/>
            <person name="Fasulo D."/>
            <person name="Halldorsson B.V."/>
            <person name="Hannenhalli S."/>
            <person name="Turner R."/>
            <person name="Yooseph S."/>
            <person name="Lu F."/>
            <person name="Nusskern D.R."/>
            <person name="Shue B.C."/>
            <person name="Zheng X.H."/>
            <person name="Zhong F."/>
            <person name="Delcher A.L."/>
            <person name="Huson D.H."/>
            <person name="Kravitz S.A."/>
            <person name="Mouchard L."/>
            <person name="Reinert K."/>
            <person name="Remington K.A."/>
            <person name="Clark A.G."/>
            <person name="Waterman M.S."/>
            <person name="Eichler E.E."/>
            <person name="Adams M.D."/>
            <person name="Hunkapiller M.W."/>
            <person name="Myers E.W."/>
            <person name="Venter J.C."/>
        </authorList>
    </citation>
    <scope>NUCLEOTIDE SEQUENCE [LARGE SCALE GENOMIC DNA]</scope>
</reference>
<reference key="7">
    <citation type="journal article" date="2004" name="Genome Res.">
        <title>The status, quality, and expansion of the NIH full-length cDNA project: the Mammalian Gene Collection (MGC).</title>
        <authorList>
            <consortium name="The MGC Project Team"/>
        </authorList>
    </citation>
    <scope>NUCLEOTIDE SEQUENCE [LARGE SCALE MRNA] (ISOFORMS 1; 2 AND 4)</scope>
    <source>
        <tissue>Eye</tissue>
        <tissue>Pancreas</tissue>
        <tissue>Placenta</tissue>
    </source>
</reference>
<reference key="8">
    <citation type="journal article" date="2001" name="J. Biol. Chem.">
        <title>The serine/threonine kinase PAK4 prevents caspase activation and protects cells from apoptosis.</title>
        <authorList>
            <person name="Gnesutta N."/>
            <person name="Qu J."/>
            <person name="Minden A."/>
        </authorList>
    </citation>
    <scope>FUNCTION IN PHOSPHORYLATION OF BAD</scope>
</reference>
<reference key="9">
    <citation type="journal article" date="2001" name="Mol. Cell. Biol.">
        <title>Activated PAK4 regulates cell adhesion and anchorage-independent growth.</title>
        <authorList>
            <person name="Qu J."/>
            <person name="Cammarano M.S."/>
            <person name="Shi Q."/>
            <person name="Ha K.C."/>
            <person name="de Lanerolle P."/>
            <person name="Minden A."/>
        </authorList>
    </citation>
    <scope>FUNCTION</scope>
    <scope>MUTAGENESIS OF SER-445 AND SER-474</scope>
</reference>
<reference key="10">
    <citation type="journal article" date="2002" name="J. Cell Biol.">
        <title>P21-activated kinase 4 interacts with integrin alpha v beta 5 and regulates alpha v beta 5-mediated cell migration.</title>
        <authorList>
            <person name="Zhang H."/>
            <person name="Li Z."/>
            <person name="Viklund E.K."/>
            <person name="Stromblad S."/>
        </authorList>
    </citation>
    <scope>SUBCELLULAR LOCATION</scope>
</reference>
<reference key="11">
    <citation type="journal article" date="2003" name="Mol. Cell. Biol.">
        <title>Death receptor-induced activation of initiator caspase 8 is antagonized by serine/threonine kinase PAK4.</title>
        <authorList>
            <person name="Gnesutta N."/>
            <person name="Minden A."/>
        </authorList>
    </citation>
    <scope>FUNCTION</scope>
</reference>
<reference key="12">
    <citation type="journal article" date="2005" name="EMBO J.">
        <title>Interplay between components of a novel LIM kinase-slingshot phosphatase complex regulates cofilin.</title>
        <authorList>
            <person name="Soosairajah J."/>
            <person name="Maiti S."/>
            <person name="Wiggan O."/>
            <person name="Sarmiere P."/>
            <person name="Moussi N."/>
            <person name="Sarcevic B."/>
            <person name="Sampath R."/>
            <person name="Bamburg J.R."/>
            <person name="Bernard O."/>
        </authorList>
    </citation>
    <scope>FUNCTION</scope>
</reference>
<reference key="13">
    <citation type="journal article" date="2005" name="J. Cell Sci.">
        <title>PAK4 mediates morphological changes through the regulation of GEF-H1.</title>
        <authorList>
            <person name="Callow M.G."/>
            <person name="Zozulya S."/>
            <person name="Gishizky M.L."/>
            <person name="Jallal B."/>
            <person name="Smeal T."/>
        </authorList>
    </citation>
    <scope>INTERACTION WITH ARHGEF2</scope>
</reference>
<reference key="14">
    <citation type="journal article" date="2006" name="Cell">
        <title>Global, in vivo, and site-specific phosphorylation dynamics in signaling networks.</title>
        <authorList>
            <person name="Olsen J.V."/>
            <person name="Blagoev B."/>
            <person name="Gnad F."/>
            <person name="Macek B."/>
            <person name="Kumar C."/>
            <person name="Mortensen P."/>
            <person name="Mann M."/>
        </authorList>
    </citation>
    <scope>PHOSPHORYLATION [LARGE SCALE ANALYSIS] AT SER-474</scope>
    <scope>IDENTIFICATION BY MASS SPECTROMETRY [LARGE SCALE ANALYSIS]</scope>
    <source>
        <tissue>Cervix carcinoma</tissue>
    </source>
</reference>
<reference key="15">
    <citation type="journal article" date="2008" name="Mol. Cell">
        <title>Kinase-selective enrichment enables quantitative phosphoproteomics of the kinome across the cell cycle.</title>
        <authorList>
            <person name="Daub H."/>
            <person name="Olsen J.V."/>
            <person name="Bairlein M."/>
            <person name="Gnad F."/>
            <person name="Oppermann F.S."/>
            <person name="Korner R."/>
            <person name="Greff Z."/>
            <person name="Keri G."/>
            <person name="Stemmann O."/>
            <person name="Mann M."/>
        </authorList>
    </citation>
    <scope>PHOSPHORYLATION [LARGE SCALE ANALYSIS] AT SER-41; SER-104; SER-148; SER-167; SER-181; SER-258; SER-267; SER-291 AND SER-474</scope>
    <scope>IDENTIFICATION BY MASS SPECTROMETRY [LARGE SCALE ANALYSIS]</scope>
    <source>
        <tissue>Cervix carcinoma</tissue>
    </source>
</reference>
<reference key="16">
    <citation type="journal article" date="2008" name="Proc. Natl. Acad. Sci. U.S.A.">
        <title>A quantitative atlas of mitotic phosphorylation.</title>
        <authorList>
            <person name="Dephoure N."/>
            <person name="Zhou C."/>
            <person name="Villen J."/>
            <person name="Beausoleil S.A."/>
            <person name="Bakalarski C.E."/>
            <person name="Elledge S.J."/>
            <person name="Gygi S.P."/>
        </authorList>
    </citation>
    <scope>PHOSPHORYLATION [LARGE SCALE ANALYSIS] AT SER-181 AND SER-474</scope>
    <scope>IDENTIFICATION BY MASS SPECTROMETRY [LARGE SCALE ANALYSIS]</scope>
    <source>
        <tissue>Cervix carcinoma</tissue>
    </source>
</reference>
<reference key="17">
    <citation type="journal article" date="2009" name="Mol. Cell. Proteomics">
        <title>Large-scale proteomics analysis of the human kinome.</title>
        <authorList>
            <person name="Oppermann F.S."/>
            <person name="Gnad F."/>
            <person name="Olsen J.V."/>
            <person name="Hornberger R."/>
            <person name="Greff Z."/>
            <person name="Keri G."/>
            <person name="Mann M."/>
            <person name="Daub H."/>
        </authorList>
    </citation>
    <scope>PHOSPHORYLATION [LARGE SCALE ANALYSIS] AT SER-41; SER-104; SER-148; SER-167; SER-181; THR-187; SER-195; SER-258; SER-291 AND SER-474</scope>
    <scope>IDENTIFICATION BY MASS SPECTROMETRY [LARGE SCALE ANALYSIS]</scope>
</reference>
<reference key="18">
    <citation type="journal article" date="2009" name="Sci. Signal.">
        <title>Quantitative phosphoproteomic analysis of T cell receptor signaling reveals system-wide modulation of protein-protein interactions.</title>
        <authorList>
            <person name="Mayya V."/>
            <person name="Lundgren D.H."/>
            <person name="Hwang S.-I."/>
            <person name="Rezaul K."/>
            <person name="Wu L."/>
            <person name="Eng J.K."/>
            <person name="Rodionov V."/>
            <person name="Han D.K."/>
        </authorList>
    </citation>
    <scope>PHOSPHORYLATION [LARGE SCALE ANALYSIS] AT SER-181 AND SER-474</scope>
    <scope>IDENTIFICATION BY MASS SPECTROMETRY [LARGE SCALE ANALYSIS]</scope>
    <source>
        <tissue>Leukemic T-cell</tissue>
    </source>
</reference>
<reference key="19">
    <citation type="journal article" date="2010" name="J. Biol. Chem.">
        <title>p21-activated kinase 4 phosphorylation of integrin beta5 Ser-759 and Ser-762 regulates cell migration.</title>
        <authorList>
            <person name="Li Z."/>
            <person name="Zhang H."/>
            <person name="Lundin L."/>
            <person name="Thullberg M."/>
            <person name="Liu Y."/>
            <person name="Wang Y."/>
            <person name="Claesson-Welsh L."/>
            <person name="Stromblad S."/>
        </authorList>
    </citation>
    <scope>FUNCTION IN PHOSPHORYLATION OF ITGB5</scope>
</reference>
<reference key="20">
    <citation type="journal article" date="2010" name="J. Cell Biol.">
        <title>Subgroup II PAK-mediated phosphorylation regulates Ran activity during mitosis.</title>
        <authorList>
            <person name="Bompard G."/>
            <person name="Rabeharivelo G."/>
            <person name="Frank M."/>
            <person name="Cau J."/>
            <person name="Delsert C."/>
            <person name="Morin N."/>
        </authorList>
    </citation>
    <scope>FUNCTION IN PHOSPHORYLATION OF RAN</scope>
</reference>
<reference key="21">
    <citation type="journal article" date="2010" name="Mol. Biol. Cell">
        <title>Cdc42 regulates apical junction formation in human bronchial epithelial cells through PAK4 and Par6B.</title>
        <authorList>
            <person name="Wallace S.W."/>
            <person name="Durgan J."/>
            <person name="Jin D."/>
            <person name="Hall A."/>
        </authorList>
    </citation>
    <scope>FUNCTION</scope>
</reference>
<reference key="22">
    <citation type="journal article" date="2002" name="Int. J. Biochem. Cell Biol.">
        <title>p21-activated kinases: three more join the Pak.</title>
        <authorList>
            <person name="Jaffer Z.M."/>
            <person name="Chernoff J."/>
        </authorList>
    </citation>
    <scope>REVIEW</scope>
</reference>
<reference key="23">
    <citation type="journal article" date="2010" name="Biochem. J.">
        <title>The emerging importance of group II PAKs.</title>
        <authorList>
            <person name="Wells C.M."/>
            <person name="Jones G.E."/>
        </authorList>
    </citation>
    <scope>REVIEW ON FUNCTION</scope>
</reference>
<reference key="24">
    <citation type="journal article" date="2010" name="Sci. Signal.">
        <title>Quantitative phosphoproteomics reveals widespread full phosphorylation site occupancy during mitosis.</title>
        <authorList>
            <person name="Olsen J.V."/>
            <person name="Vermeulen M."/>
            <person name="Santamaria A."/>
            <person name="Kumar C."/>
            <person name="Miller M.L."/>
            <person name="Jensen L.J."/>
            <person name="Gnad F."/>
            <person name="Cox J."/>
            <person name="Jensen T.S."/>
            <person name="Nigg E.A."/>
            <person name="Brunak S."/>
            <person name="Mann M."/>
        </authorList>
    </citation>
    <scope>PHOSPHORYLATION [LARGE SCALE ANALYSIS] AT SER-474</scope>
    <scope>IDENTIFICATION BY MASS SPECTROMETRY [LARGE SCALE ANALYSIS]</scope>
    <source>
        <tissue>Cervix carcinoma</tissue>
    </source>
</reference>
<reference key="25">
    <citation type="journal article" date="2011" name="BMC Syst. Biol.">
        <title>Initial characterization of the human central proteome.</title>
        <authorList>
            <person name="Burkard T.R."/>
            <person name="Planyavsky M."/>
            <person name="Kaupe I."/>
            <person name="Breitwieser F.P."/>
            <person name="Buerckstuemmer T."/>
            <person name="Bennett K.L."/>
            <person name="Superti-Furga G."/>
            <person name="Colinge J."/>
        </authorList>
    </citation>
    <scope>IDENTIFICATION BY MASS SPECTROMETRY [LARGE SCALE ANALYSIS]</scope>
</reference>
<reference key="26">
    <citation type="journal article" date="2011" name="Sci. Signal.">
        <title>System-wide temporal characterization of the proteome and phosphoproteome of human embryonic stem cell differentiation.</title>
        <authorList>
            <person name="Rigbolt K.T."/>
            <person name="Prokhorova T.A."/>
            <person name="Akimov V."/>
            <person name="Henningsen J."/>
            <person name="Johansen P.T."/>
            <person name="Kratchmarova I."/>
            <person name="Kassem M."/>
            <person name="Mann M."/>
            <person name="Olsen J.V."/>
            <person name="Blagoev B."/>
        </authorList>
    </citation>
    <scope>PHOSPHORYLATION [LARGE SCALE ANALYSIS] AT SER-181 AND SER-474</scope>
    <scope>IDENTIFICATION BY MASS SPECTROMETRY [LARGE SCALE ANALYSIS]</scope>
</reference>
<reference key="27">
    <citation type="journal article" date="2013" name="J. Proteome Res.">
        <title>Toward a comprehensive characterization of a human cancer cell phosphoproteome.</title>
        <authorList>
            <person name="Zhou H."/>
            <person name="Di Palma S."/>
            <person name="Preisinger C."/>
            <person name="Peng M."/>
            <person name="Polat A.N."/>
            <person name="Heck A.J."/>
            <person name="Mohammed S."/>
        </authorList>
    </citation>
    <scope>PHOSPHORYLATION [LARGE SCALE ANALYSIS] AT SER-41; SER-181; THR-207 AND SER-474</scope>
    <scope>IDENTIFICATION BY MASS SPECTROMETRY [LARGE SCALE ANALYSIS]</scope>
    <source>
        <tissue>Cervix carcinoma</tissue>
        <tissue>Erythroleukemia</tissue>
    </source>
</reference>
<reference key="28">
    <citation type="journal article" date="2014" name="Carcinogenesis">
        <title>SH3RF2 functions as an oncogene by mediating PAK4 protein stability.</title>
        <authorList>
            <person name="Kim T.W."/>
            <person name="Kang Y.K."/>
            <person name="Park Z.Y."/>
            <person name="Kim Y.H."/>
            <person name="Hong S.W."/>
            <person name="Oh S.J."/>
            <person name="Sohn H.A."/>
            <person name="Yang S.J."/>
            <person name="Jang Y.J."/>
            <person name="Lee D.C."/>
            <person name="Kim S.Y."/>
            <person name="Yoo H.S."/>
            <person name="Kim E."/>
            <person name="Yeom Y.I."/>
            <person name="Park K.C."/>
        </authorList>
    </citation>
    <scope>INTERACTION WITH SH3RF2</scope>
    <scope>UBIQUITINATION</scope>
    <scope>PROTEASOMAL DEGRADATION</scope>
</reference>
<reference key="29">
    <citation type="journal article" date="2014" name="J. Proteomics">
        <title>An enzyme assisted RP-RPLC approach for in-depth analysis of human liver phosphoproteome.</title>
        <authorList>
            <person name="Bian Y."/>
            <person name="Song C."/>
            <person name="Cheng K."/>
            <person name="Dong M."/>
            <person name="Wang F."/>
            <person name="Huang J."/>
            <person name="Sun D."/>
            <person name="Wang L."/>
            <person name="Ye M."/>
            <person name="Zou H."/>
        </authorList>
    </citation>
    <scope>PHOSPHORYLATION [LARGE SCALE ANALYSIS] AT SER-181</scope>
    <scope>IDENTIFICATION BY MASS SPECTROMETRY [LARGE SCALE ANALYSIS]</scope>
    <source>
        <tissue>Liver</tissue>
    </source>
</reference>
<reference key="30">
    <citation type="journal article" date="2014" name="Mol. Cell. Proteomics">
        <title>Immunoaffinity enrichment and mass spectrometry analysis of protein methylation.</title>
        <authorList>
            <person name="Guo A."/>
            <person name="Gu H."/>
            <person name="Zhou J."/>
            <person name="Mulhern D."/>
            <person name="Wang Y."/>
            <person name="Lee K.A."/>
            <person name="Yang V."/>
            <person name="Aguiar M."/>
            <person name="Kornhauser J."/>
            <person name="Jia X."/>
            <person name="Ren J."/>
            <person name="Beausoleil S.A."/>
            <person name="Silva J.C."/>
            <person name="Vemulapalli V."/>
            <person name="Bedford M.T."/>
            <person name="Comb M.J."/>
        </authorList>
    </citation>
    <scope>METHYLATION [LARGE SCALE ANALYSIS] AT LYS-78</scope>
    <scope>IDENTIFICATION BY MASS SPECTROMETRY [LARGE SCALE ANALYSIS]</scope>
    <source>
        <tissue>Colon carcinoma</tissue>
    </source>
</reference>
<reference key="31">
    <citation type="journal article" date="2015" name="J. Cell Biol.">
        <title>PAK4 promotes kinase-independent stabilization of RhoU to modulate cell adhesion.</title>
        <authorList>
            <person name="Dart A.E."/>
            <person name="Box G.M."/>
            <person name="Court W."/>
            <person name="Gale M.E."/>
            <person name="Brown J.P."/>
            <person name="Pinder S.E."/>
            <person name="Eccles S.A."/>
            <person name="Wells C.M."/>
        </authorList>
    </citation>
    <scope>FUNCTION</scope>
    <scope>INTERACTION WITH RHOU AND PAXI</scope>
    <scope>SUBCELLULAR LOCATION</scope>
    <scope>MUTAGENESIS OF HIS-19; HIS-22; LYS-350 AND LYS-351</scope>
</reference>
<reference key="32">
    <citation type="journal article" date="2018" name="J. Mol. Biol.">
        <title>Oligomerization and Auto-methylation of the Human Lysine Methyltransferase SETD6.</title>
        <authorList>
            <person name="Weil L.E."/>
            <person name="Shmidov Y."/>
            <person name="Kublanovsky M."/>
            <person name="Morgenstern D."/>
            <person name="Feldman M."/>
            <person name="Bitton R."/>
            <person name="Levy D."/>
        </authorList>
    </citation>
    <scope>METHYLATION</scope>
</reference>
<reference key="33">
    <citation type="submission" date="2005-07" db="PDB data bank">
        <title>Crystal structure of the human p21-activated kinase 4.</title>
        <authorList>
            <person name="Eswaran J."/>
            <person name="Debreczeni J.E."/>
            <person name="Bunkoczi G."/>
            <person name="Filippakopoulos P."/>
            <person name="Das S."/>
            <person name="Fedorov O."/>
            <person name="Sundstrom M."/>
            <person name="Arrowsmith C."/>
            <person name="Edwards A."/>
            <person name="von Delft F."/>
            <person name="Knapp S."/>
        </authorList>
    </citation>
    <scope>X-RAY CRYSTALLOGRAPHY (2.3 ANGSTROMS) OF 300-591</scope>
    <scope>PHOSPHORYLATION AT SER-474</scope>
</reference>
<reference key="34">
    <citation type="journal article" date="2015" name="Nat. Commun.">
        <title>An in cellulo-derived structure of PAK4 in complex with its inhibitor Inka1.</title>
        <authorList>
            <person name="Baskaran Y."/>
            <person name="Ang K.C."/>
            <person name="Anekal P.V."/>
            <person name="Chan W.L."/>
            <person name="Grimes J.M."/>
            <person name="Manser E."/>
            <person name="Robinson R.C."/>
        </authorList>
    </citation>
    <scope>X-RAY CRYSTALLOGRAPHY (2.06 ANGSTROMS) OF 286-591 IN COMPLEX WITH INKA1</scope>
    <scope>FUNCTION</scope>
    <scope>INTERACTION WITH INKA1</scope>
    <scope>ACTIVITY REGULATION</scope>
</reference>
<reference key="35">
    <citation type="journal article" date="2007" name="Nature">
        <title>Patterns of somatic mutation in human cancer genomes.</title>
        <authorList>
            <person name="Greenman C."/>
            <person name="Stephens P."/>
            <person name="Smith R."/>
            <person name="Dalgliesh G.L."/>
            <person name="Hunter C."/>
            <person name="Bignell G."/>
            <person name="Davies H."/>
            <person name="Teague J."/>
            <person name="Butler A."/>
            <person name="Stevens C."/>
            <person name="Edkins S."/>
            <person name="O'Meara S."/>
            <person name="Vastrik I."/>
            <person name="Schmidt E.E."/>
            <person name="Avis T."/>
            <person name="Barthorpe S."/>
            <person name="Bhamra G."/>
            <person name="Buck G."/>
            <person name="Choudhury B."/>
            <person name="Clements J."/>
            <person name="Cole J."/>
            <person name="Dicks E."/>
            <person name="Forbes S."/>
            <person name="Gray K."/>
            <person name="Halliday K."/>
            <person name="Harrison R."/>
            <person name="Hills K."/>
            <person name="Hinton J."/>
            <person name="Jenkinson A."/>
            <person name="Jones D."/>
            <person name="Menzies A."/>
            <person name="Mironenko T."/>
            <person name="Perry J."/>
            <person name="Raine K."/>
            <person name="Richardson D."/>
            <person name="Shepherd R."/>
            <person name="Small A."/>
            <person name="Tofts C."/>
            <person name="Varian J."/>
            <person name="Webb T."/>
            <person name="West S."/>
            <person name="Widaa S."/>
            <person name="Yates A."/>
            <person name="Cahill D.P."/>
            <person name="Louis D.N."/>
            <person name="Goldstraw P."/>
            <person name="Nicholson A.G."/>
            <person name="Brasseur F."/>
            <person name="Looijenga L."/>
            <person name="Weber B.L."/>
            <person name="Chiew Y.-E."/>
            <person name="DeFazio A."/>
            <person name="Greaves M.F."/>
            <person name="Green A.R."/>
            <person name="Campbell P."/>
            <person name="Birney E."/>
            <person name="Easton D.F."/>
            <person name="Chenevix-Trench G."/>
            <person name="Tan M.-H."/>
            <person name="Khoo S.K."/>
            <person name="Teh B.T."/>
            <person name="Yuen S.T."/>
            <person name="Leung S.Y."/>
            <person name="Wooster R."/>
            <person name="Futreal P.A."/>
            <person name="Stratton M.R."/>
        </authorList>
    </citation>
    <scope>VARIANTS [LARGE SCALE ANALYSIS] GLN-135 AND THR-139</scope>
</reference>
<proteinExistence type="evidence at protein level"/>
<name>PAK4_HUMAN</name>
<keyword id="KW-0002">3D-structure</keyword>
<keyword id="KW-0025">Alternative splicing</keyword>
<keyword id="KW-0053">Apoptosis</keyword>
<keyword id="KW-0067">ATP-binding</keyword>
<keyword id="KW-0131">Cell cycle</keyword>
<keyword id="KW-0963">Cytoplasm</keyword>
<keyword id="KW-0418">Kinase</keyword>
<keyword id="KW-0488">Methylation</keyword>
<keyword id="KW-0547">Nucleotide-binding</keyword>
<keyword id="KW-0597">Phosphoprotein</keyword>
<keyword id="KW-1267">Proteomics identification</keyword>
<keyword id="KW-1185">Reference proteome</keyword>
<keyword id="KW-0723">Serine/threonine-protein kinase</keyword>
<keyword id="KW-0808">Transferase</keyword>
<keyword id="KW-0832">Ubl conjugation</keyword>
<gene>
    <name evidence="26" type="primary">PAK4</name>
    <name type="synonym">KIAA1142</name>
</gene>
<dbReference type="EC" id="2.7.11.1"/>
<dbReference type="EMBL" id="AJ011855">
    <property type="protein sequence ID" value="CAA09820.1"/>
    <property type="molecule type" value="mRNA"/>
</dbReference>
<dbReference type="EMBL" id="AF005046">
    <property type="protein sequence ID" value="AAD01210.1"/>
    <property type="molecule type" value="mRNA"/>
</dbReference>
<dbReference type="EMBL" id="AB032968">
    <property type="protein sequence ID" value="BAA86456.1"/>
    <property type="status" value="ALT_INIT"/>
    <property type="molecule type" value="mRNA"/>
</dbReference>
<dbReference type="EMBL" id="AK074728">
    <property type="protein sequence ID" value="BAC11166.1"/>
    <property type="status" value="ALT_INIT"/>
    <property type="molecule type" value="mRNA"/>
</dbReference>
<dbReference type="EMBL" id="AK294586">
    <property type="protein sequence ID" value="BAG57777.1"/>
    <property type="molecule type" value="mRNA"/>
</dbReference>
<dbReference type="EMBL" id="AL834236">
    <property type="protein sequence ID" value="CAD38914.2"/>
    <property type="molecule type" value="mRNA"/>
</dbReference>
<dbReference type="EMBL" id="CH471126">
    <property type="protein sequence ID" value="EAW56861.1"/>
    <property type="molecule type" value="Genomic_DNA"/>
</dbReference>
<dbReference type="EMBL" id="BC002921">
    <property type="protein sequence ID" value="AAH02921.1"/>
    <property type="molecule type" value="mRNA"/>
</dbReference>
<dbReference type="EMBL" id="BC011368">
    <property type="protein sequence ID" value="AAH11368.1"/>
    <property type="molecule type" value="mRNA"/>
</dbReference>
<dbReference type="EMBL" id="BC025282">
    <property type="protein sequence ID" value="AAH25282.1"/>
    <property type="molecule type" value="mRNA"/>
</dbReference>
<dbReference type="EMBL" id="BC034511">
    <property type="protein sequence ID" value="AAH34511.1"/>
    <property type="molecule type" value="mRNA"/>
</dbReference>
<dbReference type="CCDS" id="CCDS12528.1">
    <molecule id="O96013-1"/>
</dbReference>
<dbReference type="CCDS" id="CCDS33019.1">
    <molecule id="O96013-3"/>
</dbReference>
<dbReference type="RefSeq" id="NP_001014831.1">
    <molecule id="O96013-1"/>
    <property type="nucleotide sequence ID" value="NM_001014831.3"/>
</dbReference>
<dbReference type="RefSeq" id="NP_001014832.1">
    <molecule id="O96013-1"/>
    <property type="nucleotide sequence ID" value="NM_001014832.2"/>
</dbReference>
<dbReference type="RefSeq" id="NP_001014834.1">
    <molecule id="O96013-3"/>
    <property type="nucleotide sequence ID" value="NM_001014834.3"/>
</dbReference>
<dbReference type="RefSeq" id="NP_001014835.1">
    <molecule id="O96013-3"/>
    <property type="nucleotide sequence ID" value="NM_001014835.2"/>
</dbReference>
<dbReference type="RefSeq" id="NP_001381430.1">
    <molecule id="O96013-1"/>
    <property type="nucleotide sequence ID" value="NM_001394501.1"/>
</dbReference>
<dbReference type="RefSeq" id="NP_005875.1">
    <molecule id="O96013-1"/>
    <property type="nucleotide sequence ID" value="NM_005884.5"/>
</dbReference>
<dbReference type="RefSeq" id="XP_011524618.1">
    <molecule id="O96013-1"/>
    <property type="nucleotide sequence ID" value="XM_011526316.2"/>
</dbReference>
<dbReference type="RefSeq" id="XP_011524619.1">
    <molecule id="O96013-1"/>
    <property type="nucleotide sequence ID" value="XM_011526317.3"/>
</dbReference>
<dbReference type="RefSeq" id="XP_011524620.1">
    <property type="nucleotide sequence ID" value="XM_011526318.2"/>
</dbReference>
<dbReference type="RefSeq" id="XP_011524621.1">
    <property type="nucleotide sequence ID" value="XM_011526319.2"/>
</dbReference>
<dbReference type="RefSeq" id="XP_011524622.1">
    <molecule id="O96013-3"/>
    <property type="nucleotide sequence ID" value="XM_011526320.2"/>
</dbReference>
<dbReference type="RefSeq" id="XP_024307082.1">
    <molecule id="O96013-3"/>
    <property type="nucleotide sequence ID" value="XM_024451314.2"/>
</dbReference>
<dbReference type="RefSeq" id="XP_047293990.1">
    <molecule id="O96013-1"/>
    <property type="nucleotide sequence ID" value="XM_047438034.1"/>
</dbReference>
<dbReference type="RefSeq" id="XP_047293991.1">
    <molecule id="O96013-1"/>
    <property type="nucleotide sequence ID" value="XM_047438035.1"/>
</dbReference>
<dbReference type="RefSeq" id="XP_047293992.1">
    <molecule id="O96013-1"/>
    <property type="nucleotide sequence ID" value="XM_047438036.1"/>
</dbReference>
<dbReference type="RefSeq" id="XP_047293993.1">
    <molecule id="O96013-1"/>
    <property type="nucleotide sequence ID" value="XM_047438037.1"/>
</dbReference>
<dbReference type="RefSeq" id="XP_047293994.1">
    <molecule id="O96013-1"/>
    <property type="nucleotide sequence ID" value="XM_047438038.1"/>
</dbReference>
<dbReference type="RefSeq" id="XP_047293996.1">
    <molecule id="O96013-3"/>
    <property type="nucleotide sequence ID" value="XM_047438040.1"/>
</dbReference>
<dbReference type="RefSeq" id="XP_047293997.1">
    <molecule id="O96013-3"/>
    <property type="nucleotide sequence ID" value="XM_047438041.1"/>
</dbReference>
<dbReference type="RefSeq" id="XP_054175478.1">
    <molecule id="O96013-1"/>
    <property type="nucleotide sequence ID" value="XM_054319503.1"/>
</dbReference>
<dbReference type="RefSeq" id="XP_054175479.1">
    <molecule id="O96013-1"/>
    <property type="nucleotide sequence ID" value="XM_054319504.1"/>
</dbReference>
<dbReference type="RefSeq" id="XP_054175480.1">
    <molecule id="O96013-1"/>
    <property type="nucleotide sequence ID" value="XM_054319505.1"/>
</dbReference>
<dbReference type="RefSeq" id="XP_054175481.1">
    <molecule id="O96013-1"/>
    <property type="nucleotide sequence ID" value="XM_054319506.1"/>
</dbReference>
<dbReference type="RefSeq" id="XP_054175482.1">
    <molecule id="O96013-1"/>
    <property type="nucleotide sequence ID" value="XM_054319507.1"/>
</dbReference>
<dbReference type="RefSeq" id="XP_054175483.1">
    <molecule id="O96013-1"/>
    <property type="nucleotide sequence ID" value="XM_054319508.1"/>
</dbReference>
<dbReference type="RefSeq" id="XP_054175484.1">
    <molecule id="O96013-1"/>
    <property type="nucleotide sequence ID" value="XM_054319509.1"/>
</dbReference>
<dbReference type="RefSeq" id="XP_054175485.1">
    <molecule id="O96013-3"/>
    <property type="nucleotide sequence ID" value="XM_054319510.1"/>
</dbReference>
<dbReference type="RefSeq" id="XP_054175486.1">
    <molecule id="O96013-3"/>
    <property type="nucleotide sequence ID" value="XM_054319511.1"/>
</dbReference>
<dbReference type="RefSeq" id="XP_054175487.1">
    <molecule id="O96013-3"/>
    <property type="nucleotide sequence ID" value="XM_054319512.1"/>
</dbReference>
<dbReference type="RefSeq" id="XP_054175488.1">
    <molecule id="O96013-3"/>
    <property type="nucleotide sequence ID" value="XM_054319513.1"/>
</dbReference>
<dbReference type="PDB" id="2BVA">
    <property type="method" value="X-ray"/>
    <property type="resolution" value="2.30 A"/>
    <property type="chains" value="A/B=300-591"/>
</dbReference>
<dbReference type="PDB" id="2CDZ">
    <property type="method" value="X-ray"/>
    <property type="resolution" value="2.30 A"/>
    <property type="chains" value="A=291-591"/>
</dbReference>
<dbReference type="PDB" id="2J0I">
    <property type="method" value="X-ray"/>
    <property type="resolution" value="1.60 A"/>
    <property type="chains" value="A=291-591"/>
</dbReference>
<dbReference type="PDB" id="2OV2">
    <property type="method" value="X-ray"/>
    <property type="resolution" value="2.10 A"/>
    <property type="chains" value="I/J/K/L/M/N/O/P=10-44"/>
</dbReference>
<dbReference type="PDB" id="2Q0N">
    <property type="method" value="X-ray"/>
    <property type="resolution" value="1.75 A"/>
    <property type="chains" value="A=291-591"/>
</dbReference>
<dbReference type="PDB" id="2X4Z">
    <property type="method" value="X-ray"/>
    <property type="resolution" value="2.10 A"/>
    <property type="chains" value="A=297-591"/>
</dbReference>
<dbReference type="PDB" id="4APP">
    <property type="method" value="X-ray"/>
    <property type="resolution" value="2.20 A"/>
    <property type="chains" value="A=300-591"/>
</dbReference>
<dbReference type="PDB" id="4FIE">
    <property type="method" value="X-ray"/>
    <property type="resolution" value="3.11 A"/>
    <property type="chains" value="A/B=5-591"/>
</dbReference>
<dbReference type="PDB" id="4FIF">
    <property type="method" value="X-ray"/>
    <property type="resolution" value="2.60 A"/>
    <property type="chains" value="A/B=286-591, C/D=49-56"/>
</dbReference>
<dbReference type="PDB" id="4FIG">
    <property type="method" value="X-ray"/>
    <property type="resolution" value="3.01 A"/>
    <property type="chains" value="A/B=286-591"/>
</dbReference>
<dbReference type="PDB" id="4FIH">
    <property type="method" value="X-ray"/>
    <property type="resolution" value="1.97 A"/>
    <property type="chains" value="A=286-591"/>
</dbReference>
<dbReference type="PDB" id="4FII">
    <property type="method" value="X-ray"/>
    <property type="resolution" value="2.00 A"/>
    <property type="chains" value="A=286-591, B=49-56"/>
</dbReference>
<dbReference type="PDB" id="4FIJ">
    <property type="method" value="X-ray"/>
    <property type="resolution" value="2.30 A"/>
    <property type="chains" value="A=286-591"/>
</dbReference>
<dbReference type="PDB" id="4JDH">
    <property type="method" value="X-ray"/>
    <property type="resolution" value="2.00 A"/>
    <property type="chains" value="A=286-591"/>
</dbReference>
<dbReference type="PDB" id="4JDI">
    <property type="method" value="X-ray"/>
    <property type="resolution" value="1.85 A"/>
    <property type="chains" value="A=286-591"/>
</dbReference>
<dbReference type="PDB" id="4JDJ">
    <property type="method" value="X-ray"/>
    <property type="resolution" value="2.30 A"/>
    <property type="chains" value="A=286-591"/>
</dbReference>
<dbReference type="PDB" id="4JDK">
    <property type="method" value="X-ray"/>
    <property type="resolution" value="2.40 A"/>
    <property type="chains" value="A=286-591"/>
</dbReference>
<dbReference type="PDB" id="4L67">
    <property type="method" value="X-ray"/>
    <property type="resolution" value="2.80 A"/>
    <property type="chains" value="A=300-591, B=36-60"/>
</dbReference>
<dbReference type="PDB" id="4NJD">
    <property type="method" value="X-ray"/>
    <property type="resolution" value="2.50 A"/>
    <property type="chains" value="A=300-591"/>
</dbReference>
<dbReference type="PDB" id="4O0V">
    <property type="method" value="X-ray"/>
    <property type="resolution" value="2.80 A"/>
    <property type="chains" value="A=300-591"/>
</dbReference>
<dbReference type="PDB" id="4O0X">
    <property type="method" value="X-ray"/>
    <property type="resolution" value="2.48 A"/>
    <property type="chains" value="A=300-591"/>
</dbReference>
<dbReference type="PDB" id="4O0Y">
    <property type="method" value="X-ray"/>
    <property type="resolution" value="2.20 A"/>
    <property type="chains" value="A=300-591"/>
</dbReference>
<dbReference type="PDB" id="4XBR">
    <property type="method" value="X-ray"/>
    <property type="resolution" value="2.94 A"/>
    <property type="chains" value="A=278-591"/>
</dbReference>
<dbReference type="PDB" id="4XBU">
    <property type="method" value="X-ray"/>
    <property type="resolution" value="2.06 A"/>
    <property type="chains" value="A=286-591"/>
</dbReference>
<dbReference type="PDB" id="5BMS">
    <property type="method" value="X-ray"/>
    <property type="resolution" value="2.90 A"/>
    <property type="chains" value="A=300-591"/>
</dbReference>
<dbReference type="PDB" id="5I0B">
    <property type="method" value="X-ray"/>
    <property type="resolution" value="3.09 A"/>
    <property type="chains" value="A=300-591"/>
</dbReference>
<dbReference type="PDB" id="5UPK">
    <property type="method" value="X-ray"/>
    <property type="resolution" value="2.40 A"/>
    <property type="chains" value="A=1-45, B=286-591"/>
</dbReference>
<dbReference type="PDB" id="5UPL">
    <property type="method" value="X-ray"/>
    <property type="resolution" value="3.00 A"/>
    <property type="chains" value="A=2-591"/>
</dbReference>
<dbReference type="PDB" id="5VED">
    <property type="method" value="X-ray"/>
    <property type="resolution" value="2.30 A"/>
    <property type="chains" value="A=286-591"/>
</dbReference>
<dbReference type="PDB" id="5VEE">
    <property type="method" value="X-ray"/>
    <property type="resolution" value="2.50 A"/>
    <property type="chains" value="A=286-591"/>
</dbReference>
<dbReference type="PDB" id="5VEF">
    <property type="method" value="X-ray"/>
    <property type="resolution" value="1.75 A"/>
    <property type="chains" value="A=286-591"/>
</dbReference>
<dbReference type="PDB" id="5XVA">
    <property type="method" value="X-ray"/>
    <property type="resolution" value="1.85 A"/>
    <property type="chains" value="A=300-591"/>
</dbReference>
<dbReference type="PDB" id="5XVF">
    <property type="method" value="X-ray"/>
    <property type="resolution" value="2.65 A"/>
    <property type="chains" value="A=300-588"/>
</dbReference>
<dbReference type="PDB" id="5XVG">
    <property type="method" value="X-ray"/>
    <property type="resolution" value="2.10 A"/>
    <property type="chains" value="A=300-591"/>
</dbReference>
<dbReference type="PDB" id="5ZJW">
    <property type="method" value="X-ray"/>
    <property type="resolution" value="1.80 A"/>
    <property type="chains" value="A=300-591"/>
</dbReference>
<dbReference type="PDB" id="6WLX">
    <property type="method" value="X-ray"/>
    <property type="resolution" value="2.20 A"/>
    <property type="chains" value="A=286-591"/>
</dbReference>
<dbReference type="PDB" id="6WLY">
    <property type="method" value="X-ray"/>
    <property type="resolution" value="1.90 A"/>
    <property type="chains" value="A=286-591"/>
</dbReference>
<dbReference type="PDB" id="7CMB">
    <property type="method" value="X-ray"/>
    <property type="resolution" value="2.59 A"/>
    <property type="chains" value="A=300-591"/>
</dbReference>
<dbReference type="PDB" id="7CP3">
    <property type="method" value="X-ray"/>
    <property type="resolution" value="2.90 A"/>
    <property type="chains" value="A=300-591"/>
</dbReference>
<dbReference type="PDB" id="7CP4">
    <property type="method" value="X-ray"/>
    <property type="resolution" value="2.50 A"/>
    <property type="chains" value="A=300-591"/>
</dbReference>
<dbReference type="PDB" id="7S46">
    <property type="method" value="X-ray"/>
    <property type="resolution" value="2.10 A"/>
    <property type="chains" value="A=286-591"/>
</dbReference>
<dbReference type="PDB" id="7S47">
    <property type="method" value="X-ray"/>
    <property type="resolution" value="2.00 A"/>
    <property type="chains" value="A=286-591"/>
</dbReference>
<dbReference type="PDB" id="7S48">
    <property type="method" value="X-ray"/>
    <property type="resolution" value="1.90 A"/>
    <property type="chains" value="A=286-591"/>
</dbReference>
<dbReference type="PDB" id="8AHG">
    <property type="method" value="X-ray"/>
    <property type="resolution" value="1.89 A"/>
    <property type="chains" value="A=300-591"/>
</dbReference>
<dbReference type="PDB" id="8AHH">
    <property type="method" value="X-ray"/>
    <property type="resolution" value="2.04 A"/>
    <property type="chains" value="A=300-591"/>
</dbReference>
<dbReference type="PDB" id="8AHI">
    <property type="method" value="X-ray"/>
    <property type="resolution" value="2.69 A"/>
    <property type="chains" value="A=300-591"/>
</dbReference>
<dbReference type="PDB" id="8YHK">
    <property type="method" value="X-ray"/>
    <property type="resolution" value="3.30 A"/>
    <property type="chains" value="A=291-591"/>
</dbReference>
<dbReference type="PDBsum" id="2BVA"/>
<dbReference type="PDBsum" id="2CDZ"/>
<dbReference type="PDBsum" id="2J0I"/>
<dbReference type="PDBsum" id="2OV2"/>
<dbReference type="PDBsum" id="2Q0N"/>
<dbReference type="PDBsum" id="2X4Z"/>
<dbReference type="PDBsum" id="4APP"/>
<dbReference type="PDBsum" id="4FIE"/>
<dbReference type="PDBsum" id="4FIF"/>
<dbReference type="PDBsum" id="4FIG"/>
<dbReference type="PDBsum" id="4FIH"/>
<dbReference type="PDBsum" id="4FII"/>
<dbReference type="PDBsum" id="4FIJ"/>
<dbReference type="PDBsum" id="4JDH"/>
<dbReference type="PDBsum" id="4JDI"/>
<dbReference type="PDBsum" id="4JDJ"/>
<dbReference type="PDBsum" id="4JDK"/>
<dbReference type="PDBsum" id="4L67"/>
<dbReference type="PDBsum" id="4NJD"/>
<dbReference type="PDBsum" id="4O0V"/>
<dbReference type="PDBsum" id="4O0X"/>
<dbReference type="PDBsum" id="4O0Y"/>
<dbReference type="PDBsum" id="4XBR"/>
<dbReference type="PDBsum" id="4XBU"/>
<dbReference type="PDBsum" id="5BMS"/>
<dbReference type="PDBsum" id="5I0B"/>
<dbReference type="PDBsum" id="5UPK"/>
<dbReference type="PDBsum" id="5UPL"/>
<dbReference type="PDBsum" id="5VED"/>
<dbReference type="PDBsum" id="5VEE"/>
<dbReference type="PDBsum" id="5VEF"/>
<dbReference type="PDBsum" id="5XVA"/>
<dbReference type="PDBsum" id="5XVF"/>
<dbReference type="PDBsum" id="5XVG"/>
<dbReference type="PDBsum" id="5ZJW"/>
<dbReference type="PDBsum" id="6WLX"/>
<dbReference type="PDBsum" id="6WLY"/>
<dbReference type="PDBsum" id="7CMB"/>
<dbReference type="PDBsum" id="7CP3"/>
<dbReference type="PDBsum" id="7CP4"/>
<dbReference type="PDBsum" id="7S46"/>
<dbReference type="PDBsum" id="7S47"/>
<dbReference type="PDBsum" id="7S48"/>
<dbReference type="PDBsum" id="8AHG"/>
<dbReference type="PDBsum" id="8AHH"/>
<dbReference type="PDBsum" id="8AHI"/>
<dbReference type="PDBsum" id="8YHK"/>
<dbReference type="SMR" id="O96013"/>
<dbReference type="BioGRID" id="115586">
    <property type="interactions" value="173"/>
</dbReference>
<dbReference type="DIP" id="DIP-39742N"/>
<dbReference type="FunCoup" id="O96013">
    <property type="interactions" value="2030"/>
</dbReference>
<dbReference type="IntAct" id="O96013">
    <property type="interactions" value="357"/>
</dbReference>
<dbReference type="MINT" id="O96013"/>
<dbReference type="STRING" id="9606.ENSP00000469413"/>
<dbReference type="BindingDB" id="O96013"/>
<dbReference type="ChEMBL" id="CHEMBL4482"/>
<dbReference type="DrugBank" id="DB12010">
    <property type="generic name" value="Fostamatinib"/>
</dbReference>
<dbReference type="DrugBank" id="DB19243">
    <property type="generic name" value="Padnarsertib"/>
</dbReference>
<dbReference type="DrugBank" id="DB11775">
    <property type="generic name" value="PF-03758309"/>
</dbReference>
<dbReference type="DrugCentral" id="O96013"/>
<dbReference type="GuidetoPHARMACOLOGY" id="2136"/>
<dbReference type="GlyGen" id="O96013">
    <property type="glycosylation" value="3 sites, 1 N-linked glycan (1 site), 1 O-linked glycan (1 site)"/>
</dbReference>
<dbReference type="iPTMnet" id="O96013"/>
<dbReference type="MetOSite" id="O96013"/>
<dbReference type="PhosphoSitePlus" id="O96013"/>
<dbReference type="BioMuta" id="PAK4"/>
<dbReference type="CPTAC" id="CPTAC-3073"/>
<dbReference type="CPTAC" id="CPTAC-5891"/>
<dbReference type="jPOST" id="O96013"/>
<dbReference type="MassIVE" id="O96013"/>
<dbReference type="PaxDb" id="9606-ENSP00000469413"/>
<dbReference type="PeptideAtlas" id="O96013"/>
<dbReference type="ProteomicsDB" id="51192">
    <molecule id="O96013-1"/>
</dbReference>
<dbReference type="ProteomicsDB" id="51193">
    <molecule id="O96013-2"/>
</dbReference>
<dbReference type="ProteomicsDB" id="51194">
    <molecule id="O96013-3"/>
</dbReference>
<dbReference type="ProteomicsDB" id="51195">
    <molecule id="O96013-4"/>
</dbReference>
<dbReference type="Pumba" id="O96013"/>
<dbReference type="Antibodypedia" id="16732">
    <property type="antibodies" value="632 antibodies from 43 providers"/>
</dbReference>
<dbReference type="CPTC" id="O96013">
    <property type="antibodies" value="1 antibody"/>
</dbReference>
<dbReference type="DNASU" id="10298"/>
<dbReference type="Ensembl" id="ENST00000321944.8">
    <molecule id="O96013-4"/>
    <property type="protein sequence ID" value="ENSP00000326864.4"/>
    <property type="gene ID" value="ENSG00000130669.17"/>
</dbReference>
<dbReference type="Ensembl" id="ENST00000358301.7">
    <molecule id="O96013-1"/>
    <property type="protein sequence ID" value="ENSP00000351049.2"/>
    <property type="gene ID" value="ENSG00000130669.17"/>
</dbReference>
<dbReference type="Ensembl" id="ENST00000360442.8">
    <molecule id="O96013-1"/>
    <property type="protein sequence ID" value="ENSP00000353625.3"/>
    <property type="gene ID" value="ENSG00000130669.17"/>
</dbReference>
<dbReference type="Ensembl" id="ENST00000593690.5">
    <molecule id="O96013-1"/>
    <property type="protein sequence ID" value="ENSP00000469413.1"/>
    <property type="gene ID" value="ENSG00000130669.17"/>
</dbReference>
<dbReference type="Ensembl" id="ENST00000599386.5">
    <molecule id="O96013-3"/>
    <property type="protein sequence ID" value="ENSP00000471157.1"/>
    <property type="gene ID" value="ENSG00000130669.17"/>
</dbReference>
<dbReference type="Ensembl" id="ENST00000599470.5">
    <molecule id="O96013-3"/>
    <property type="protein sequence ID" value="ENSP00000470284.1"/>
    <property type="gene ID" value="ENSG00000130669.17"/>
</dbReference>
<dbReference type="GeneID" id="10298"/>
<dbReference type="KEGG" id="hsa:10298"/>
<dbReference type="MANE-Select" id="ENST00000360442.8">
    <property type="protein sequence ID" value="ENSP00000353625.3"/>
    <property type="RefSeq nucleotide sequence ID" value="NM_005884.5"/>
    <property type="RefSeq protein sequence ID" value="NP_005875.1"/>
</dbReference>
<dbReference type="UCSC" id="uc002okj.2">
    <molecule id="O96013-1"/>
    <property type="organism name" value="human"/>
</dbReference>
<dbReference type="AGR" id="HGNC:16059"/>
<dbReference type="CTD" id="10298"/>
<dbReference type="DisGeNET" id="10298"/>
<dbReference type="GeneCards" id="PAK4"/>
<dbReference type="HGNC" id="HGNC:16059">
    <property type="gene designation" value="PAK4"/>
</dbReference>
<dbReference type="HPA" id="ENSG00000130669">
    <property type="expression patterns" value="Low tissue specificity"/>
</dbReference>
<dbReference type="MalaCards" id="PAK4"/>
<dbReference type="MIM" id="605451">
    <property type="type" value="gene"/>
</dbReference>
<dbReference type="neXtProt" id="NX_O96013"/>
<dbReference type="OpenTargets" id="ENSG00000130669"/>
<dbReference type="PharmGKB" id="PA32920"/>
<dbReference type="VEuPathDB" id="HostDB:ENSG00000130669"/>
<dbReference type="eggNOG" id="KOG0578">
    <property type="taxonomic scope" value="Eukaryota"/>
</dbReference>
<dbReference type="GeneTree" id="ENSGT00940000159792"/>
<dbReference type="HOGENOM" id="CLU_000288_26_6_1"/>
<dbReference type="InParanoid" id="O96013"/>
<dbReference type="OMA" id="QRDQPGD"/>
<dbReference type="OrthoDB" id="1022360at2759"/>
<dbReference type="PAN-GO" id="O96013">
    <property type="GO annotations" value="5 GO annotations based on evolutionary models"/>
</dbReference>
<dbReference type="PhylomeDB" id="O96013"/>
<dbReference type="TreeFam" id="TF105352"/>
<dbReference type="BRENDA" id="2.7.11.1">
    <property type="organism ID" value="2681"/>
</dbReference>
<dbReference type="PathwayCommons" id="O96013"/>
<dbReference type="Reactome" id="R-HSA-428540">
    <property type="pathway name" value="Activation of RAC1"/>
</dbReference>
<dbReference type="Reactome" id="R-HSA-9013148">
    <property type="pathway name" value="CDC42 GTPase cycle"/>
</dbReference>
<dbReference type="Reactome" id="R-HSA-9013149">
    <property type="pathway name" value="RAC1 GTPase cycle"/>
</dbReference>
<dbReference type="Reactome" id="R-HSA-9013404">
    <property type="pathway name" value="RAC2 GTPase cycle"/>
</dbReference>
<dbReference type="Reactome" id="R-HSA-9013406">
    <property type="pathway name" value="RHOQ GTPase cycle"/>
</dbReference>
<dbReference type="Reactome" id="R-HSA-9013407">
    <property type="pathway name" value="RHOH GTPase cycle"/>
</dbReference>
<dbReference type="Reactome" id="R-HSA-9013408">
    <property type="pathway name" value="RHOG GTPase cycle"/>
</dbReference>
<dbReference type="Reactome" id="R-HSA-9013409">
    <property type="pathway name" value="RHOJ GTPase cycle"/>
</dbReference>
<dbReference type="Reactome" id="R-HSA-9013420">
    <property type="pathway name" value="RHOU GTPase cycle"/>
</dbReference>
<dbReference type="Reactome" id="R-HSA-9013423">
    <property type="pathway name" value="RAC3 GTPase cycle"/>
</dbReference>
<dbReference type="Reactome" id="R-HSA-9013424">
    <property type="pathway name" value="RHOV GTPase cycle"/>
</dbReference>
<dbReference type="SignaLink" id="O96013"/>
<dbReference type="SIGNOR" id="O96013"/>
<dbReference type="BioGRID-ORCS" id="10298">
    <property type="hits" value="23 hits in 1198 CRISPR screens"/>
</dbReference>
<dbReference type="CD-CODE" id="DEE660B4">
    <property type="entry name" value="Stress granule"/>
</dbReference>
<dbReference type="ChiTaRS" id="PAK4">
    <property type="organism name" value="human"/>
</dbReference>
<dbReference type="EvolutionaryTrace" id="O96013"/>
<dbReference type="GeneWiki" id="PAK4"/>
<dbReference type="GenomeRNAi" id="10298"/>
<dbReference type="Pharos" id="O96013">
    <property type="development level" value="Tchem"/>
</dbReference>
<dbReference type="PRO" id="PR:O96013"/>
<dbReference type="Proteomes" id="UP000005640">
    <property type="component" value="Chromosome 19"/>
</dbReference>
<dbReference type="RNAct" id="O96013">
    <property type="molecule type" value="protein"/>
</dbReference>
<dbReference type="Bgee" id="ENSG00000130669">
    <property type="expression patterns" value="Expressed in type B pancreatic cell and 203 other cell types or tissues"/>
</dbReference>
<dbReference type="ExpressionAtlas" id="O96013">
    <property type="expression patterns" value="baseline and differential"/>
</dbReference>
<dbReference type="GO" id="GO:0005912">
    <property type="term" value="C:adherens junction"/>
    <property type="evidence" value="ECO:0007005"/>
    <property type="project" value="BHF-UCL"/>
</dbReference>
<dbReference type="GO" id="GO:0005737">
    <property type="term" value="C:cytoplasm"/>
    <property type="evidence" value="ECO:0000318"/>
    <property type="project" value="GO_Central"/>
</dbReference>
<dbReference type="GO" id="GO:0005829">
    <property type="term" value="C:cytosol"/>
    <property type="evidence" value="ECO:0000304"/>
    <property type="project" value="Reactome"/>
</dbReference>
<dbReference type="GO" id="GO:0005925">
    <property type="term" value="C:focal adhesion"/>
    <property type="evidence" value="ECO:0007005"/>
    <property type="project" value="UniProtKB"/>
</dbReference>
<dbReference type="GO" id="GO:0005794">
    <property type="term" value="C:Golgi apparatus"/>
    <property type="evidence" value="ECO:0000304"/>
    <property type="project" value="ProtInc"/>
</dbReference>
<dbReference type="GO" id="GO:0005524">
    <property type="term" value="F:ATP binding"/>
    <property type="evidence" value="ECO:0007669"/>
    <property type="project" value="UniProtKB-KW"/>
</dbReference>
<dbReference type="GO" id="GO:0098641">
    <property type="term" value="F:cadherin binding involved in cell-cell adhesion"/>
    <property type="evidence" value="ECO:0007005"/>
    <property type="project" value="BHF-UCL"/>
</dbReference>
<dbReference type="GO" id="GO:0004672">
    <property type="term" value="F:protein kinase activity"/>
    <property type="evidence" value="ECO:0000303"/>
    <property type="project" value="ProtInc"/>
</dbReference>
<dbReference type="GO" id="GO:0106310">
    <property type="term" value="F:protein serine kinase activity"/>
    <property type="evidence" value="ECO:0007669"/>
    <property type="project" value="RHEA"/>
</dbReference>
<dbReference type="GO" id="GO:0004674">
    <property type="term" value="F:protein serine/threonine kinase activity"/>
    <property type="evidence" value="ECO:0000314"/>
    <property type="project" value="UniProtKB"/>
</dbReference>
<dbReference type="GO" id="GO:0006915">
    <property type="term" value="P:apoptotic process"/>
    <property type="evidence" value="ECO:0000304"/>
    <property type="project" value="UniProtKB"/>
</dbReference>
<dbReference type="GO" id="GO:0016477">
    <property type="term" value="P:cell migration"/>
    <property type="evidence" value="ECO:0000304"/>
    <property type="project" value="UniProtKB"/>
</dbReference>
<dbReference type="GO" id="GO:0009267">
    <property type="term" value="P:cellular response to starvation"/>
    <property type="evidence" value="ECO:0000318"/>
    <property type="project" value="GO_Central"/>
</dbReference>
<dbReference type="GO" id="GO:0007010">
    <property type="term" value="P:cytoskeleton organization"/>
    <property type="evidence" value="ECO:0000304"/>
    <property type="project" value="UniProtKB"/>
</dbReference>
<dbReference type="GO" id="GO:0060996">
    <property type="term" value="P:dendritic spine development"/>
    <property type="evidence" value="ECO:0007669"/>
    <property type="project" value="Ensembl"/>
</dbReference>
<dbReference type="GO" id="GO:0035556">
    <property type="term" value="P:intracellular signal transduction"/>
    <property type="evidence" value="ECO:0000318"/>
    <property type="project" value="GO_Central"/>
</dbReference>
<dbReference type="GO" id="GO:2000352">
    <property type="term" value="P:negative regulation of endothelial cell apoptotic process"/>
    <property type="evidence" value="ECO:0000315"/>
    <property type="project" value="BHF-UCL"/>
</dbReference>
<dbReference type="GO" id="GO:0045766">
    <property type="term" value="P:positive regulation of angiogenesis"/>
    <property type="evidence" value="ECO:0000315"/>
    <property type="project" value="BHF-UCL"/>
</dbReference>
<dbReference type="GO" id="GO:0001558">
    <property type="term" value="P:regulation of cell growth"/>
    <property type="evidence" value="ECO:0000304"/>
    <property type="project" value="UniProtKB"/>
</dbReference>
<dbReference type="GO" id="GO:0043408">
    <property type="term" value="P:regulation of MAPK cascade"/>
    <property type="evidence" value="ECO:0000318"/>
    <property type="project" value="GO_Central"/>
</dbReference>
<dbReference type="GO" id="GO:0007165">
    <property type="term" value="P:signal transduction"/>
    <property type="evidence" value="ECO:0000304"/>
    <property type="project" value="UniProtKB"/>
</dbReference>
<dbReference type="CDD" id="cd01093">
    <property type="entry name" value="CRIB_PAK_like"/>
    <property type="match status" value="1"/>
</dbReference>
<dbReference type="CDD" id="cd06657">
    <property type="entry name" value="STKc_PAK4"/>
    <property type="match status" value="1"/>
</dbReference>
<dbReference type="DisProt" id="DP01184"/>
<dbReference type="FunFam" id="1.10.510.10:FF:000073">
    <property type="entry name" value="Non-specific serine/threonine protein kinase"/>
    <property type="match status" value="1"/>
</dbReference>
<dbReference type="FunFam" id="3.30.200.20:FF:000141">
    <property type="entry name" value="Non-specific serine/threonine protein kinase"/>
    <property type="match status" value="1"/>
</dbReference>
<dbReference type="FunFam" id="3.90.810.10:FF:000002">
    <property type="entry name" value="Non-specific serine/threonine protein kinase"/>
    <property type="match status" value="1"/>
</dbReference>
<dbReference type="Gene3D" id="3.90.810.10">
    <property type="entry name" value="CRIB domain"/>
    <property type="match status" value="1"/>
</dbReference>
<dbReference type="Gene3D" id="3.30.200.20">
    <property type="entry name" value="Phosphorylase Kinase, domain 1"/>
    <property type="match status" value="1"/>
</dbReference>
<dbReference type="Gene3D" id="1.10.510.10">
    <property type="entry name" value="Transferase(Phosphotransferase) domain 1"/>
    <property type="match status" value="1"/>
</dbReference>
<dbReference type="InterPro" id="IPR000095">
    <property type="entry name" value="CRIB_dom"/>
</dbReference>
<dbReference type="InterPro" id="IPR036936">
    <property type="entry name" value="CRIB_dom_sf"/>
</dbReference>
<dbReference type="InterPro" id="IPR011009">
    <property type="entry name" value="Kinase-like_dom_sf"/>
</dbReference>
<dbReference type="InterPro" id="IPR051931">
    <property type="entry name" value="PAK3-like"/>
</dbReference>
<dbReference type="InterPro" id="IPR033923">
    <property type="entry name" value="PAK_BD"/>
</dbReference>
<dbReference type="InterPro" id="IPR000719">
    <property type="entry name" value="Prot_kinase_dom"/>
</dbReference>
<dbReference type="InterPro" id="IPR017441">
    <property type="entry name" value="Protein_kinase_ATP_BS"/>
</dbReference>
<dbReference type="PANTHER" id="PTHR45832:SF9">
    <property type="entry name" value="NON-SPECIFIC SERINE_THREONINE PROTEIN KINASE"/>
    <property type="match status" value="1"/>
</dbReference>
<dbReference type="PANTHER" id="PTHR45832">
    <property type="entry name" value="SERINE/THREONINE-PROTEIN KINASE SAMKA-RELATED-RELATED"/>
    <property type="match status" value="1"/>
</dbReference>
<dbReference type="Pfam" id="PF00786">
    <property type="entry name" value="PBD"/>
    <property type="match status" value="1"/>
</dbReference>
<dbReference type="Pfam" id="PF00069">
    <property type="entry name" value="Pkinase"/>
    <property type="match status" value="1"/>
</dbReference>
<dbReference type="SMART" id="SM00285">
    <property type="entry name" value="PBD"/>
    <property type="match status" value="1"/>
</dbReference>
<dbReference type="SUPFAM" id="SSF56112">
    <property type="entry name" value="Protein kinase-like (PK-like)"/>
    <property type="match status" value="1"/>
</dbReference>
<dbReference type="PROSITE" id="PS50108">
    <property type="entry name" value="CRIB"/>
    <property type="match status" value="1"/>
</dbReference>
<dbReference type="PROSITE" id="PS00107">
    <property type="entry name" value="PROTEIN_KINASE_ATP"/>
    <property type="match status" value="1"/>
</dbReference>
<dbReference type="PROSITE" id="PS50011">
    <property type="entry name" value="PROTEIN_KINASE_DOM"/>
    <property type="match status" value="1"/>
</dbReference>
<comment type="function">
    <text evidence="5 6 8 9 12 13 14 16 17">Serine/threonine-protein kinase that plays a role in a variety of different signaling pathways including cytoskeleton regulation, cell adhesion turnover, cell migration, growth, proliferation or cell survival (PubMed:26598620). Activation by various effectors including growth factor receptors or active CDC42 and RAC1 results in a conformational change and a subsequent autophosphorylation on several serine and/or threonine residues. Phosphorylates and inactivates the protein phosphatase SSH1, leading to increased inhibitory phosphorylation of the actin binding/depolymerizing factor cofilin. Decreased cofilin activity may lead to stabilization of actin filaments. Phosphorylates LIMK1, a kinase that also inhibits the activity of cofilin. Phosphorylates integrin beta5/ITGB5 and thus regulates cell motility. Phosphorylates ARHGEF2 and activates the downstream target RHOA that plays a role in the regulation of assembly of focal adhesions and actin stress fibers. Stimulates cell survival by phosphorylating the BCL2 antagonist of cell death BAD. Alternatively, inhibits apoptosis by preventing caspase-8 binding to death domain receptors in a kinase independent manner. Plays a role in cell-cycle progression by controlling levels of the cell-cycle regulatory protein CDKN1A and by phosphorylating RAN. Promotes kinase-independent stabilization of RHOU, thereby contributing to focal adhesion disassembly during cell migration (PubMed:26598620).</text>
</comment>
<comment type="catalytic activity">
    <reaction>
        <text>L-seryl-[protein] + ATP = O-phospho-L-seryl-[protein] + ADP + H(+)</text>
        <dbReference type="Rhea" id="RHEA:17989"/>
        <dbReference type="Rhea" id="RHEA-COMP:9863"/>
        <dbReference type="Rhea" id="RHEA-COMP:11604"/>
        <dbReference type="ChEBI" id="CHEBI:15378"/>
        <dbReference type="ChEBI" id="CHEBI:29999"/>
        <dbReference type="ChEBI" id="CHEBI:30616"/>
        <dbReference type="ChEBI" id="CHEBI:83421"/>
        <dbReference type="ChEBI" id="CHEBI:456216"/>
        <dbReference type="EC" id="2.7.11.1"/>
    </reaction>
</comment>
<comment type="catalytic activity">
    <reaction>
        <text>L-threonyl-[protein] + ATP = O-phospho-L-threonyl-[protein] + ADP + H(+)</text>
        <dbReference type="Rhea" id="RHEA:46608"/>
        <dbReference type="Rhea" id="RHEA-COMP:11060"/>
        <dbReference type="Rhea" id="RHEA-COMP:11605"/>
        <dbReference type="ChEBI" id="CHEBI:15378"/>
        <dbReference type="ChEBI" id="CHEBI:30013"/>
        <dbReference type="ChEBI" id="CHEBI:30616"/>
        <dbReference type="ChEBI" id="CHEBI:61977"/>
        <dbReference type="ChEBI" id="CHEBI:456216"/>
        <dbReference type="EC" id="2.7.11.1"/>
    </reaction>
</comment>
<comment type="activity regulation">
    <text evidence="17">Inhibited by INKA1; which inhibits the serine/threonine-protein kinase activity by binding PAK4 in a substrate-like manner (PubMed:26607847).</text>
</comment>
<comment type="subunit">
    <text evidence="1 10 15 16 17">Interacts with FGFR2 and GRB2 (By similarity). Interacts tightly with GTP-bound but not GDP-bound CDC42/p21 and weakly with RAC1 (PubMed:15827085, PubMed:26598620). Interacts with INKA1 (PubMed:26607847). Interacts with SH3RF2 (PubMed:24130170). Interacts with RHOU and PAXI; the PAK4-RHOU complex protects RHOU from ubiquitination and acts as a scaffold to suppport paxillin/PAXI phosphorylation (PubMed:26598620).</text>
</comment>
<comment type="interaction">
    <interactant intactId="EBI-713738">
        <id>O96013</id>
    </interactant>
    <interactant intactId="EBI-81752">
        <id>P60953</id>
        <label>CDC42</label>
    </interactant>
    <organismsDiffer>false</organismsDiffer>
    <experiments>4</experiments>
</comment>
<comment type="interaction">
    <interactant intactId="EBI-713738">
        <id>O96013</id>
    </interactant>
    <interactant intactId="EBI-10285157">
        <id>Q96EL1</id>
        <label>INKA1</label>
    </interactant>
    <organismsDiffer>false</organismsDiffer>
    <experiments>4</experiments>
</comment>
<comment type="interaction">
    <interactant intactId="EBI-713738">
        <id>O96013</id>
    </interactant>
    <interactant intactId="EBI-476295">
        <id>P31947</id>
        <label>SFN</label>
    </interactant>
    <organismsDiffer>false</organismsDiffer>
    <experiments>5</experiments>
</comment>
<comment type="interaction">
    <interactant intactId="EBI-713738">
        <id>O96013</id>
    </interactant>
    <interactant intactId="EBI-710997">
        <id>P54274</id>
        <label>TERF1</label>
    </interactant>
    <organismsDiffer>false</organismsDiffer>
    <experiments>2</experiments>
</comment>
<comment type="interaction">
    <interactant intactId="EBI-713738">
        <id>O96013</id>
    </interactant>
    <interactant intactId="EBI-957615">
        <id>O00401</id>
        <label>WASL</label>
    </interactant>
    <organismsDiffer>false</organismsDiffer>
    <experiments>8</experiments>
</comment>
<comment type="interaction">
    <interactant intactId="EBI-713738">
        <id>O96013</id>
    </interactant>
    <interactant intactId="EBI-356498">
        <id>P62258</id>
        <label>YWHAE</label>
    </interactant>
    <organismsDiffer>false</organismsDiffer>
    <experiments>10</experiments>
</comment>
<comment type="interaction">
    <interactant intactId="EBI-713738">
        <id>O96013</id>
    </interactant>
    <interactant intactId="EBI-347088">
        <id>P63104</id>
        <label>YWHAZ</label>
    </interactant>
    <organismsDiffer>false</organismsDiffer>
    <experiments>8</experiments>
</comment>
<comment type="interaction">
    <interactant intactId="EBI-21659863">
        <id>O96013-2</id>
    </interactant>
    <interactant intactId="EBI-77613">
        <id>P05067</id>
        <label>APP</label>
    </interactant>
    <organismsDiffer>false</organismsDiffer>
    <experiments>3</experiments>
</comment>
<comment type="interaction">
    <interactant intactId="EBI-21659863">
        <id>O96013-2</id>
    </interactant>
    <interactant intactId="EBI-985879">
        <id>P37840</id>
        <label>SNCA</label>
    </interactant>
    <organismsDiffer>false</organismsDiffer>
    <experiments>3</experiments>
</comment>
<comment type="subcellular location">
    <subcellularLocation>
        <location evidence="7 16">Cytoplasm</location>
    </subcellularLocation>
    <text evidence="7">Seems to shuttle between cytoplasmic compartments depending on the activating effector. For example, can be found on the cell periphery after activation of growth-factor or integrin-mediated signaling pathways.</text>
</comment>
<comment type="alternative products">
    <event type="alternative splicing"/>
    <isoform>
        <id>O96013-1</id>
        <name>1</name>
        <sequence type="displayed"/>
    </isoform>
    <isoform>
        <id>O96013-2</id>
        <name>2</name>
        <sequence type="described" ref="VSP_004892 VSP_004893"/>
    </isoform>
    <isoform>
        <id>O96013-3</id>
        <name>3</name>
        <sequence type="described" ref="VSP_017572"/>
    </isoform>
    <isoform>
        <id>O96013-4</id>
        <name>4</name>
        <sequence type="described" ref="VSP_017573"/>
    </isoform>
</comment>
<comment type="tissue specificity">
    <text>Highest expression in prostate, testis and colon.</text>
</comment>
<comment type="PTM">
    <text evidence="1 18 19">Autophosphorylated on serine residues when activated by CDC42/p21 (Ref.33). Phosphorylated on tyrosine residues upon stimulation of FGFR2 (By similarity). Methylated by SETD6.</text>
</comment>
<comment type="PTM">
    <text evidence="15">Polyubiquitinated, leading to its proteasomal degradation.</text>
</comment>
<comment type="similarity">
    <text evidence="25">Belongs to the protein kinase superfamily. STE Ser/Thr protein kinase family. STE20 subfamily.</text>
</comment>
<comment type="sequence caution" evidence="25">
    <conflict type="erroneous initiation">
        <sequence resource="EMBL-CDS" id="BAA86456"/>
    </conflict>
</comment>
<comment type="sequence caution" evidence="25">
    <conflict type="erroneous initiation">
        <sequence resource="EMBL-CDS" id="BAC11166"/>
    </conflict>
</comment>
<sequence>MFGKRKKRVEISAPSNFEHRVHTGFDQHEQKFTGLPRQWQSLIEESARRPKPLVDPACITSIQPGAPKTIVRGSKGAKDGALTLLLDEFENMSVTRSNSLRRDSPPPPARARQENGMPEEPATTARGGPGKAGSRGRFAGHSEAGGGSGDRRRAGPEKRPKSSREGSGGPQESSRDKRPLSGPDVGTPQPAGLASGAKLAAGRPFNTYPRADTDHPSRGAQGEPHDVAPNGPSAGGLAIPQSSSSSSRPPTRARGAPSPGVLGPHASEPQLAPPACTPAAPAVPGPPGPRSPQREPQRVSHEQFRAALQLVVDPGDPRSYLDNFIKIGEGSTGIVCIATVRSSGKLVAVKKMDLRKQQRRELLFNEVVIMRDYQHENVVEMYNSYLVGDELWVVMEFLEGGALTDIVTHTRMNEEQIAAVCLAVLQALSVLHAQGVIHRDIKSDSILLTHDGRVKLSDFGFCAQVSKEVPRRKSLVGTPYWMAPELISRLPYGPEVDIWSLGIMVIEMVDGEPPYFNEPPLKAMKMIRDNLPPRLKNLHKVSPSLKGFLDRLLVRDPAQRATAAELLKHPFLAKAGPPASIVPLMRQNRTR</sequence>
<accession>O96013</accession>
<accession>B4DGG6</accession>
<accession>Q8N4E1</accession>
<accession>Q8NCH5</accession>
<accession>Q8NDE3</accession>
<accession>Q9BU33</accession>
<accession>Q9ULS8</accession>
<feature type="chain" id="PRO_0000086474" description="Serine/threonine-protein kinase PAK 4">
    <location>
        <begin position="1"/>
        <end position="591"/>
    </location>
</feature>
<feature type="domain" description="CRIB" evidence="2">
    <location>
        <begin position="11"/>
        <end position="24"/>
    </location>
</feature>
<feature type="domain" description="Protein kinase" evidence="3">
    <location>
        <begin position="321"/>
        <end position="572"/>
    </location>
</feature>
<feature type="region of interest" description="Linker">
    <location>
        <begin position="25"/>
        <end position="320"/>
    </location>
</feature>
<feature type="region of interest" description="Disordered" evidence="4">
    <location>
        <begin position="95"/>
        <end position="301"/>
    </location>
</feature>
<feature type="region of interest" description="GEF-interaction domain (GID)">
    <location>
        <begin position="298"/>
        <end position="323"/>
    </location>
</feature>
<feature type="compositionally biased region" description="Basic and acidic residues" evidence="4">
    <location>
        <begin position="149"/>
        <end position="164"/>
    </location>
</feature>
<feature type="compositionally biased region" description="Low complexity" evidence="4">
    <location>
        <begin position="191"/>
        <end position="202"/>
    </location>
</feature>
<feature type="compositionally biased region" description="Low complexity" evidence="4">
    <location>
        <begin position="242"/>
        <end position="260"/>
    </location>
</feature>
<feature type="compositionally biased region" description="Pro residues" evidence="4">
    <location>
        <begin position="271"/>
        <end position="290"/>
    </location>
</feature>
<feature type="compositionally biased region" description="Basic and acidic residues" evidence="4">
    <location>
        <begin position="292"/>
        <end position="301"/>
    </location>
</feature>
<feature type="active site" description="Proton acceptor" evidence="3">
    <location>
        <position position="440"/>
    </location>
</feature>
<feature type="binding site" evidence="3 17 27 28">
    <location>
        <begin position="327"/>
        <end position="335"/>
    </location>
    <ligand>
        <name>ATP</name>
        <dbReference type="ChEBI" id="CHEBI:30616"/>
    </ligand>
</feature>
<feature type="binding site" evidence="3 17 27 28">
    <location>
        <position position="350"/>
    </location>
    <ligand>
        <name>ATP</name>
        <dbReference type="ChEBI" id="CHEBI:30616"/>
    </ligand>
</feature>
<feature type="binding site" evidence="17 27 28">
    <location>
        <begin position="396"/>
        <end position="398"/>
    </location>
    <ligand>
        <name>ATP</name>
        <dbReference type="ChEBI" id="CHEBI:30616"/>
    </ligand>
</feature>
<feature type="binding site" evidence="17 27 28">
    <location>
        <begin position="458"/>
        <end position="460"/>
    </location>
    <ligand>
        <name>ATP</name>
        <dbReference type="ChEBI" id="CHEBI:30616"/>
    </ligand>
</feature>
<feature type="modified residue" description="Phosphoserine" evidence="31 32 36">
    <location>
        <position position="41"/>
    </location>
</feature>
<feature type="modified residue" description="N6-methyllysine" evidence="37">
    <location>
        <position position="78"/>
    </location>
</feature>
<feature type="modified residue" description="Phosphoserine" evidence="31 32">
    <location>
        <position position="104"/>
    </location>
</feature>
<feature type="modified residue" description="Phosphoserine" evidence="31 32">
    <location>
        <position position="148"/>
    </location>
</feature>
<feature type="modified residue" description="Phosphoserine" evidence="31 32">
    <location>
        <position position="167"/>
    </location>
</feature>
<feature type="modified residue" description="Phosphoserine" evidence="30 31 32 33 35 36 38">
    <location>
        <position position="181"/>
    </location>
</feature>
<feature type="modified residue" description="Phosphothreonine" evidence="32">
    <location>
        <position position="187"/>
    </location>
</feature>
<feature type="modified residue" description="Phosphoserine" evidence="32">
    <location>
        <position position="195"/>
    </location>
</feature>
<feature type="modified residue" description="Phosphothreonine" evidence="36">
    <location>
        <position position="207"/>
    </location>
</feature>
<feature type="modified residue" description="Phosphoserine" evidence="31 32">
    <location>
        <position position="258"/>
    </location>
</feature>
<feature type="modified residue" description="Phosphoserine" evidence="31">
    <location>
        <position position="267"/>
    </location>
</feature>
<feature type="modified residue" description="Phosphoserine" evidence="31 32">
    <location>
        <position position="291"/>
    </location>
</feature>
<feature type="modified residue" description="Phosphoserine; by autocatalysis" evidence="19 29 30 31 32 33 34 35 36">
    <location>
        <position position="474"/>
    </location>
</feature>
<feature type="splice variant" id="VSP_017572" description="In isoform 3." evidence="20 22 24">
    <location>
        <begin position="69"/>
        <end position="221"/>
    </location>
</feature>
<feature type="splice variant" id="VSP_004892" description="In isoform 2." evidence="23">
    <original>E</original>
    <variation>K</variation>
    <location>
        <position position="120"/>
    </location>
</feature>
<feature type="splice variant" id="VSP_004893" description="In isoform 2." evidence="23">
    <location>
        <begin position="121"/>
        <end position="285"/>
    </location>
</feature>
<feature type="splice variant" id="VSP_017573" description="In isoform 4." evidence="23">
    <location>
        <begin position="132"/>
        <end position="221"/>
    </location>
</feature>
<feature type="sequence variant" id="VAR_040970" description="In dbSNP:rs56099436." evidence="11">
    <original>R</original>
    <variation>Q</variation>
    <location>
        <position position="135"/>
    </location>
</feature>
<feature type="sequence variant" id="VAR_040971" description="In dbSNP:rs35655056." evidence="11">
    <original>A</original>
    <variation>T</variation>
    <location>
        <position position="139"/>
    </location>
</feature>
<feature type="mutagenesis site" description="No change in cell motility; in association with L-22." evidence="16">
    <original>H</original>
    <variation>L</variation>
    <location>
        <position position="19"/>
    </location>
</feature>
<feature type="mutagenesis site" description="No change in cell motility; in association with L-19." evidence="16">
    <original>H</original>
    <variation>L</variation>
    <location>
        <position position="22"/>
    </location>
</feature>
<feature type="mutagenesis site" description="No change in cell motility; in association with M-351." evidence="16">
    <original>K</original>
    <variation>M</variation>
    <location>
        <position position="350"/>
    </location>
</feature>
<feature type="mutagenesis site" description="No change in cell motility; in association with M-350." evidence="16">
    <original>K</original>
    <variation>M</variation>
    <location>
        <position position="351"/>
    </location>
</feature>
<feature type="mutagenesis site" description="Approximately 30-fold increased autophosphorylation (constitutively active mutant)." evidence="6">
    <original>S</original>
    <variation>N</variation>
    <location>
        <position position="445"/>
    </location>
</feature>
<feature type="mutagenesis site" description="Approximately 3-fold increased autophosphorylation." evidence="6">
    <original>S</original>
    <variation>E</variation>
    <location>
        <position position="474"/>
    </location>
</feature>
<feature type="strand" evidence="40">
    <location>
        <begin position="15"/>
        <end position="26"/>
    </location>
</feature>
<feature type="turn" evidence="40">
    <location>
        <begin position="27"/>
        <end position="30"/>
    </location>
</feature>
<feature type="strand" evidence="40">
    <location>
        <begin position="31"/>
        <end position="34"/>
    </location>
</feature>
<feature type="helix" evidence="40">
    <location>
        <begin position="37"/>
        <end position="39"/>
    </location>
</feature>
<feature type="turn" evidence="40">
    <location>
        <begin position="40"/>
        <end position="42"/>
    </location>
</feature>
<feature type="turn" evidence="43">
    <location>
        <begin position="46"/>
        <end position="48"/>
    </location>
</feature>
<feature type="helix" evidence="39">
    <location>
        <begin position="301"/>
        <end position="311"/>
    </location>
</feature>
<feature type="strand" evidence="44">
    <location>
        <begin position="312"/>
        <end position="315"/>
    </location>
</feature>
<feature type="helix" evidence="39">
    <location>
        <begin position="317"/>
        <end position="319"/>
    </location>
</feature>
<feature type="strand" evidence="39">
    <location>
        <begin position="321"/>
        <end position="329"/>
    </location>
</feature>
<feature type="strand" evidence="43">
    <location>
        <begin position="331"/>
        <end position="333"/>
    </location>
</feature>
<feature type="strand" evidence="39">
    <location>
        <begin position="334"/>
        <end position="340"/>
    </location>
</feature>
<feature type="turn" evidence="39">
    <location>
        <begin position="341"/>
        <end position="343"/>
    </location>
</feature>
<feature type="strand" evidence="39">
    <location>
        <begin position="346"/>
        <end position="353"/>
    </location>
</feature>
<feature type="helix" evidence="41">
    <location>
        <begin position="354"/>
        <end position="356"/>
    </location>
</feature>
<feature type="helix" evidence="39">
    <location>
        <begin position="360"/>
        <end position="362"/>
    </location>
</feature>
<feature type="helix" evidence="39">
    <location>
        <begin position="363"/>
        <end position="369"/>
    </location>
</feature>
<feature type="turn" evidence="39">
    <location>
        <begin position="370"/>
        <end position="372"/>
    </location>
</feature>
<feature type="strand" evidence="39">
    <location>
        <begin position="381"/>
        <end position="387"/>
    </location>
</feature>
<feature type="strand" evidence="39">
    <location>
        <begin position="390"/>
        <end position="395"/>
    </location>
</feature>
<feature type="helix" evidence="39">
    <location>
        <begin position="403"/>
        <end position="409"/>
    </location>
</feature>
<feature type="helix" evidence="39">
    <location>
        <begin position="414"/>
        <end position="433"/>
    </location>
</feature>
<feature type="helix" evidence="39">
    <location>
        <begin position="443"/>
        <end position="445"/>
    </location>
</feature>
<feature type="strand" evidence="39">
    <location>
        <begin position="446"/>
        <end position="448"/>
    </location>
</feature>
<feature type="strand" evidence="39">
    <location>
        <begin position="454"/>
        <end position="456"/>
    </location>
</feature>
<feature type="helix" evidence="42">
    <location>
        <begin position="459"/>
        <end position="461"/>
    </location>
</feature>
<feature type="strand" evidence="39">
    <location>
        <begin position="467"/>
        <end position="469"/>
    </location>
</feature>
<feature type="strand" evidence="41">
    <location>
        <begin position="475"/>
        <end position="477"/>
    </location>
</feature>
<feature type="helix" evidence="39">
    <location>
        <begin position="479"/>
        <end position="481"/>
    </location>
</feature>
<feature type="helix" evidence="39">
    <location>
        <begin position="484"/>
        <end position="487"/>
    </location>
</feature>
<feature type="helix" evidence="39">
    <location>
        <begin position="495"/>
        <end position="510"/>
    </location>
</feature>
<feature type="turn" evidence="39">
    <location>
        <begin position="514"/>
        <end position="517"/>
    </location>
</feature>
<feature type="helix" evidence="39">
    <location>
        <begin position="520"/>
        <end position="529"/>
    </location>
</feature>
<feature type="helix" evidence="39">
    <location>
        <begin position="538"/>
        <end position="540"/>
    </location>
</feature>
<feature type="helix" evidence="39">
    <location>
        <begin position="543"/>
        <end position="552"/>
    </location>
</feature>
<feature type="turn" evidence="39">
    <location>
        <begin position="557"/>
        <end position="559"/>
    </location>
</feature>
<feature type="helix" evidence="39">
    <location>
        <begin position="563"/>
        <end position="566"/>
    </location>
</feature>
<feature type="helix" evidence="39">
    <location>
        <begin position="570"/>
        <end position="574"/>
    </location>
</feature>
<feature type="helix" evidence="39">
    <location>
        <begin position="578"/>
        <end position="581"/>
    </location>
</feature>
<feature type="helix" evidence="39">
    <location>
        <begin position="582"/>
        <end position="584"/>
    </location>
</feature>
<feature type="turn" evidence="39">
    <location>
        <begin position="586"/>
        <end position="588"/>
    </location>
</feature>
<protein>
    <recommendedName>
        <fullName>Serine/threonine-protein kinase PAK 4</fullName>
        <ecNumber>2.7.11.1</ecNumber>
    </recommendedName>
    <alternativeName>
        <fullName evidence="21">p21-activated kinase 4</fullName>
        <shortName>PAK-4</shortName>
    </alternativeName>
</protein>
<evidence type="ECO:0000250" key="1">
    <source>
        <dbReference type="UniProtKB" id="Q8BTW9"/>
    </source>
</evidence>
<evidence type="ECO:0000255" key="2">
    <source>
        <dbReference type="PROSITE-ProRule" id="PRU00057"/>
    </source>
</evidence>
<evidence type="ECO:0000255" key="3">
    <source>
        <dbReference type="PROSITE-ProRule" id="PRU00159"/>
    </source>
</evidence>
<evidence type="ECO:0000256" key="4">
    <source>
        <dbReference type="SAM" id="MobiDB-lite"/>
    </source>
</evidence>
<evidence type="ECO:0000269" key="5">
    <source>
    </source>
</evidence>
<evidence type="ECO:0000269" key="6">
    <source>
    </source>
</evidence>
<evidence type="ECO:0000269" key="7">
    <source>
    </source>
</evidence>
<evidence type="ECO:0000269" key="8">
    <source>
    </source>
</evidence>
<evidence type="ECO:0000269" key="9">
    <source>
    </source>
</evidence>
<evidence type="ECO:0000269" key="10">
    <source>
    </source>
</evidence>
<evidence type="ECO:0000269" key="11">
    <source>
    </source>
</evidence>
<evidence type="ECO:0000269" key="12">
    <source>
    </source>
</evidence>
<evidence type="ECO:0000269" key="13">
    <source>
    </source>
</evidence>
<evidence type="ECO:0000269" key="14">
    <source>
    </source>
</evidence>
<evidence type="ECO:0000269" key="15">
    <source>
    </source>
</evidence>
<evidence type="ECO:0000269" key="16">
    <source>
    </source>
</evidence>
<evidence type="ECO:0000269" key="17">
    <source>
    </source>
</evidence>
<evidence type="ECO:0000269" key="18">
    <source>
    </source>
</evidence>
<evidence type="ECO:0000269" key="19">
    <source ref="33"/>
</evidence>
<evidence type="ECO:0000303" key="20">
    <source>
    </source>
</evidence>
<evidence type="ECO:0000303" key="21">
    <source>
    </source>
</evidence>
<evidence type="ECO:0000303" key="22">
    <source>
    </source>
</evidence>
<evidence type="ECO:0000303" key="23">
    <source>
    </source>
</evidence>
<evidence type="ECO:0000303" key="24">
    <source>
    </source>
</evidence>
<evidence type="ECO:0000305" key="25"/>
<evidence type="ECO:0000312" key="26">
    <source>
        <dbReference type="HGNC" id="HGNC:16059"/>
    </source>
</evidence>
<evidence type="ECO:0007744" key="27">
    <source>
        <dbReference type="PDB" id="4XBR"/>
    </source>
</evidence>
<evidence type="ECO:0007744" key="28">
    <source>
        <dbReference type="PDB" id="4XBU"/>
    </source>
</evidence>
<evidence type="ECO:0007744" key="29">
    <source>
    </source>
</evidence>
<evidence type="ECO:0007744" key="30">
    <source>
    </source>
</evidence>
<evidence type="ECO:0007744" key="31">
    <source>
    </source>
</evidence>
<evidence type="ECO:0007744" key="32">
    <source>
    </source>
</evidence>
<evidence type="ECO:0007744" key="33">
    <source>
    </source>
</evidence>
<evidence type="ECO:0007744" key="34">
    <source>
    </source>
</evidence>
<evidence type="ECO:0007744" key="35">
    <source>
    </source>
</evidence>
<evidence type="ECO:0007744" key="36">
    <source>
    </source>
</evidence>
<evidence type="ECO:0007744" key="37">
    <source>
    </source>
</evidence>
<evidence type="ECO:0007744" key="38">
    <source>
    </source>
</evidence>
<evidence type="ECO:0007829" key="39">
    <source>
        <dbReference type="PDB" id="2J0I"/>
    </source>
</evidence>
<evidence type="ECO:0007829" key="40">
    <source>
        <dbReference type="PDB" id="2OV2"/>
    </source>
</evidence>
<evidence type="ECO:0007829" key="41">
    <source>
        <dbReference type="PDB" id="2Q0N"/>
    </source>
</evidence>
<evidence type="ECO:0007829" key="42">
    <source>
        <dbReference type="PDB" id="4FII"/>
    </source>
</evidence>
<evidence type="ECO:0007829" key="43">
    <source>
        <dbReference type="PDB" id="4L67"/>
    </source>
</evidence>
<evidence type="ECO:0007829" key="44">
    <source>
        <dbReference type="PDB" id="4O0Y"/>
    </source>
</evidence>